<feature type="chain" id="PRO_0000223202" description="Auxin-responsive protein IAA3">
    <location>
        <begin position="1"/>
        <end position="263"/>
    </location>
</feature>
<feature type="domain" description="PB1" evidence="2">
    <location>
        <begin position="158"/>
        <end position="245"/>
    </location>
</feature>
<feature type="region of interest" description="Disordered" evidence="3">
    <location>
        <begin position="1"/>
        <end position="54"/>
    </location>
</feature>
<feature type="region of interest" description="Disordered" evidence="3">
    <location>
        <begin position="76"/>
        <end position="121"/>
    </location>
</feature>
<feature type="short sequence motif" description="EAR-like (transcriptional repression)" evidence="1">
    <location>
        <begin position="39"/>
        <end position="43"/>
    </location>
</feature>
<feature type="compositionally biased region" description="Basic and acidic residues" evidence="3">
    <location>
        <begin position="28"/>
        <end position="38"/>
    </location>
</feature>
<keyword id="KW-0927">Auxin signaling pathway</keyword>
<keyword id="KW-0539">Nucleus</keyword>
<keyword id="KW-1185">Reference proteome</keyword>
<keyword id="KW-0678">Repressor</keyword>
<keyword id="KW-0804">Transcription</keyword>
<keyword id="KW-0805">Transcription regulation</keyword>
<sequence>MSPPLELDYIGLSPPPPPPSSSSAAAARADDVDLKGTELRLGLPGSESPDRRPAAIAAAAATATTLELLPAKGAKRVFPDEAALTPPTAAAGKGKAAREGEEVGAEEEDKKVAAPPQPAAKAQVVGWPPIRSYRKNTMATNQIKSNKEDVDAKQGQGFLYVKVSMDGAPYLRKVDLKTYKNYKDMSLGLEKMFIGFSTGKEGAENQKDGEYVLTYEDKDGDWMLVGDVPWEMFTDSCRRLRIMKGSDAIGLAPRAGEKSKNRN</sequence>
<name>IAA3_ORYSJ</name>
<gene>
    <name type="primary">IAA3</name>
    <name type="ordered locus">Os01g0231000</name>
    <name type="ordered locus">LOC_Os01g13030</name>
    <name type="ORF">P0431F01.14</name>
    <name type="ORF">P0485D09.31</name>
</gene>
<organism>
    <name type="scientific">Oryza sativa subsp. japonica</name>
    <name type="common">Rice</name>
    <dbReference type="NCBI Taxonomy" id="39947"/>
    <lineage>
        <taxon>Eukaryota</taxon>
        <taxon>Viridiplantae</taxon>
        <taxon>Streptophyta</taxon>
        <taxon>Embryophyta</taxon>
        <taxon>Tracheophyta</taxon>
        <taxon>Spermatophyta</taxon>
        <taxon>Magnoliopsida</taxon>
        <taxon>Liliopsida</taxon>
        <taxon>Poales</taxon>
        <taxon>Poaceae</taxon>
        <taxon>BOP clade</taxon>
        <taxon>Oryzoideae</taxon>
        <taxon>Oryzeae</taxon>
        <taxon>Oryzinae</taxon>
        <taxon>Oryza</taxon>
        <taxon>Oryza sativa</taxon>
    </lineage>
</organism>
<proteinExistence type="evidence at transcript level"/>
<dbReference type="EMBL" id="AP001550">
    <property type="protein sequence ID" value="BAD81283.1"/>
    <property type="molecule type" value="Genomic_DNA"/>
</dbReference>
<dbReference type="EMBL" id="AP001859">
    <property type="protein sequence ID" value="BAD81331.1"/>
    <property type="molecule type" value="Genomic_DNA"/>
</dbReference>
<dbReference type="EMBL" id="AP008207">
    <property type="protein sequence ID" value="BAF04409.1"/>
    <property type="molecule type" value="Genomic_DNA"/>
</dbReference>
<dbReference type="EMBL" id="AP014957">
    <property type="protein sequence ID" value="BAS71170.1"/>
    <property type="molecule type" value="Genomic_DNA"/>
</dbReference>
<dbReference type="EMBL" id="AK066156">
    <property type="protein sequence ID" value="BAG89845.1"/>
    <property type="molecule type" value="mRNA"/>
</dbReference>
<dbReference type="EMBL" id="AK104654">
    <property type="protein sequence ID" value="BAG96867.1"/>
    <property type="molecule type" value="mRNA"/>
</dbReference>
<dbReference type="RefSeq" id="XP_015621955.1">
    <property type="nucleotide sequence ID" value="XM_015766469.1"/>
</dbReference>
<dbReference type="SMR" id="Q5NB25"/>
<dbReference type="STRING" id="39947.Q5NB25"/>
<dbReference type="PaxDb" id="39947-Q5NB25"/>
<dbReference type="EnsemblPlants" id="Os01t0231000-01">
    <property type="protein sequence ID" value="Os01t0231000-01"/>
    <property type="gene ID" value="Os01g0231000"/>
</dbReference>
<dbReference type="EnsemblPlants" id="Os01t0231000-02">
    <property type="protein sequence ID" value="Os01t0231000-02"/>
    <property type="gene ID" value="Os01g0231000"/>
</dbReference>
<dbReference type="EnsemblPlants" id="Os01t0231000-03">
    <property type="protein sequence ID" value="Os01t0231000-03"/>
    <property type="gene ID" value="Os01g0231000"/>
</dbReference>
<dbReference type="Gramene" id="Os01t0231000-01">
    <property type="protein sequence ID" value="Os01t0231000-01"/>
    <property type="gene ID" value="Os01g0231000"/>
</dbReference>
<dbReference type="Gramene" id="Os01t0231000-02">
    <property type="protein sequence ID" value="Os01t0231000-02"/>
    <property type="gene ID" value="Os01g0231000"/>
</dbReference>
<dbReference type="Gramene" id="Os01t0231000-03">
    <property type="protein sequence ID" value="Os01t0231000-03"/>
    <property type="gene ID" value="Os01g0231000"/>
</dbReference>
<dbReference type="KEGG" id="dosa:Os01g0231000"/>
<dbReference type="eggNOG" id="ENOG502QTW8">
    <property type="taxonomic scope" value="Eukaryota"/>
</dbReference>
<dbReference type="HOGENOM" id="CLU_049393_1_5_1"/>
<dbReference type="InParanoid" id="Q5NB25"/>
<dbReference type="OMA" id="SSNICPE"/>
<dbReference type="OrthoDB" id="7848332at2759"/>
<dbReference type="PlantReactome" id="R-OSA-5608118">
    <property type="pathway name" value="Auxin signalling"/>
</dbReference>
<dbReference type="Proteomes" id="UP000000763">
    <property type="component" value="Chromosome 1"/>
</dbReference>
<dbReference type="Proteomes" id="UP000059680">
    <property type="component" value="Chromosome 1"/>
</dbReference>
<dbReference type="GO" id="GO:0005634">
    <property type="term" value="C:nucleus"/>
    <property type="evidence" value="ECO:0007669"/>
    <property type="project" value="UniProtKB-SubCell"/>
</dbReference>
<dbReference type="GO" id="GO:0009734">
    <property type="term" value="P:auxin-activated signaling pathway"/>
    <property type="evidence" value="ECO:0007669"/>
    <property type="project" value="UniProtKB-KW"/>
</dbReference>
<dbReference type="GO" id="GO:0006355">
    <property type="term" value="P:regulation of DNA-templated transcription"/>
    <property type="evidence" value="ECO:0007669"/>
    <property type="project" value="InterPro"/>
</dbReference>
<dbReference type="GO" id="GO:0009733">
    <property type="term" value="P:response to auxin"/>
    <property type="evidence" value="ECO:0000305"/>
    <property type="project" value="Gramene"/>
</dbReference>
<dbReference type="FunFam" id="3.10.20.90:FF:000078">
    <property type="entry name" value="Auxin-responsive protein"/>
    <property type="match status" value="1"/>
</dbReference>
<dbReference type="Gene3D" id="3.10.20.90">
    <property type="entry name" value="Phosphatidylinositol 3-kinase Catalytic Subunit, Chain A, domain 1"/>
    <property type="match status" value="1"/>
</dbReference>
<dbReference type="InterPro" id="IPR033389">
    <property type="entry name" value="AUX/IAA_dom"/>
</dbReference>
<dbReference type="InterPro" id="IPR003311">
    <property type="entry name" value="AUX_IAA"/>
</dbReference>
<dbReference type="InterPro" id="IPR053793">
    <property type="entry name" value="PB1-like"/>
</dbReference>
<dbReference type="PANTHER" id="PTHR31734">
    <property type="entry name" value="AUXIN-RESPONSIVE PROTEIN IAA17"/>
    <property type="match status" value="1"/>
</dbReference>
<dbReference type="PANTHER" id="PTHR31734:SF95">
    <property type="entry name" value="AUXIN-RESPONSIVE PROTEIN IAA3"/>
    <property type="match status" value="1"/>
</dbReference>
<dbReference type="Pfam" id="PF02309">
    <property type="entry name" value="AUX_IAA"/>
    <property type="match status" value="1"/>
</dbReference>
<dbReference type="SUPFAM" id="SSF54277">
    <property type="entry name" value="CAD &amp; PB1 domains"/>
    <property type="match status" value="1"/>
</dbReference>
<dbReference type="PROSITE" id="PS51745">
    <property type="entry name" value="PB1"/>
    <property type="match status" value="1"/>
</dbReference>
<evidence type="ECO:0000250" key="1"/>
<evidence type="ECO:0000255" key="2">
    <source>
        <dbReference type="PROSITE-ProRule" id="PRU01081"/>
    </source>
</evidence>
<evidence type="ECO:0000256" key="3">
    <source>
        <dbReference type="SAM" id="MobiDB-lite"/>
    </source>
</evidence>
<evidence type="ECO:0000269" key="4">
    <source>
    </source>
</evidence>
<evidence type="ECO:0000305" key="5"/>
<accession>Q5NB25</accession>
<accession>Q0JPB9</accession>
<comment type="function">
    <text evidence="1">Aux/IAA proteins are short-lived transcriptional factors that function as repressors of early auxin response genes at low auxin concentrations.</text>
</comment>
<comment type="subunit">
    <text evidence="1">Homodimers and heterodimers.</text>
</comment>
<comment type="subcellular location">
    <subcellularLocation>
        <location evidence="1">Nucleus</location>
    </subcellularLocation>
</comment>
<comment type="tissue specificity">
    <text evidence="4">Highly expressed in flowers. Expressed in roots and shoots.</text>
</comment>
<comment type="induction">
    <text evidence="4">Not induced by auxin.</text>
</comment>
<comment type="similarity">
    <text evidence="5">Belongs to the Aux/IAA family.</text>
</comment>
<reference key="1">
    <citation type="journal article" date="2002" name="Nature">
        <title>The genome sequence and structure of rice chromosome 1.</title>
        <authorList>
            <person name="Sasaki T."/>
            <person name="Matsumoto T."/>
            <person name="Yamamoto K."/>
            <person name="Sakata K."/>
            <person name="Baba T."/>
            <person name="Katayose Y."/>
            <person name="Wu J."/>
            <person name="Niimura Y."/>
            <person name="Cheng Z."/>
            <person name="Nagamura Y."/>
            <person name="Antonio B.A."/>
            <person name="Kanamori H."/>
            <person name="Hosokawa S."/>
            <person name="Masukawa M."/>
            <person name="Arikawa K."/>
            <person name="Chiden Y."/>
            <person name="Hayashi M."/>
            <person name="Okamoto M."/>
            <person name="Ando T."/>
            <person name="Aoki H."/>
            <person name="Arita K."/>
            <person name="Hamada M."/>
            <person name="Harada C."/>
            <person name="Hijishita S."/>
            <person name="Honda M."/>
            <person name="Ichikawa Y."/>
            <person name="Idonuma A."/>
            <person name="Iijima M."/>
            <person name="Ikeda M."/>
            <person name="Ikeno M."/>
            <person name="Ito S."/>
            <person name="Ito T."/>
            <person name="Ito Y."/>
            <person name="Ito Y."/>
            <person name="Iwabuchi A."/>
            <person name="Kamiya K."/>
            <person name="Karasawa W."/>
            <person name="Katagiri S."/>
            <person name="Kikuta A."/>
            <person name="Kobayashi N."/>
            <person name="Kono I."/>
            <person name="Machita K."/>
            <person name="Maehara T."/>
            <person name="Mizuno H."/>
            <person name="Mizubayashi T."/>
            <person name="Mukai Y."/>
            <person name="Nagasaki H."/>
            <person name="Nakashima M."/>
            <person name="Nakama Y."/>
            <person name="Nakamichi Y."/>
            <person name="Nakamura M."/>
            <person name="Namiki N."/>
            <person name="Negishi M."/>
            <person name="Ohta I."/>
            <person name="Ono N."/>
            <person name="Saji S."/>
            <person name="Sakai K."/>
            <person name="Shibata M."/>
            <person name="Shimokawa T."/>
            <person name="Shomura A."/>
            <person name="Song J."/>
            <person name="Takazaki Y."/>
            <person name="Terasawa K."/>
            <person name="Tsuji K."/>
            <person name="Waki K."/>
            <person name="Yamagata H."/>
            <person name="Yamane H."/>
            <person name="Yoshiki S."/>
            <person name="Yoshihara R."/>
            <person name="Yukawa K."/>
            <person name="Zhong H."/>
            <person name="Iwama H."/>
            <person name="Endo T."/>
            <person name="Ito H."/>
            <person name="Hahn J.H."/>
            <person name="Kim H.-I."/>
            <person name="Eun M.-Y."/>
            <person name="Yano M."/>
            <person name="Jiang J."/>
            <person name="Gojobori T."/>
        </authorList>
    </citation>
    <scope>NUCLEOTIDE SEQUENCE [LARGE SCALE GENOMIC DNA]</scope>
    <source>
        <strain>cv. Nipponbare</strain>
    </source>
</reference>
<reference key="2">
    <citation type="journal article" date="2005" name="Nature">
        <title>The map-based sequence of the rice genome.</title>
        <authorList>
            <consortium name="International rice genome sequencing project (IRGSP)"/>
        </authorList>
    </citation>
    <scope>NUCLEOTIDE SEQUENCE [LARGE SCALE GENOMIC DNA]</scope>
    <source>
        <strain>cv. Nipponbare</strain>
    </source>
</reference>
<reference key="3">
    <citation type="journal article" date="2008" name="Nucleic Acids Res.">
        <title>The rice annotation project database (RAP-DB): 2008 update.</title>
        <authorList>
            <consortium name="The rice annotation project (RAP)"/>
        </authorList>
    </citation>
    <scope>GENOME REANNOTATION</scope>
    <source>
        <strain>cv. Nipponbare</strain>
    </source>
</reference>
<reference key="4">
    <citation type="journal article" date="2013" name="Rice">
        <title>Improvement of the Oryza sativa Nipponbare reference genome using next generation sequence and optical map data.</title>
        <authorList>
            <person name="Kawahara Y."/>
            <person name="de la Bastide M."/>
            <person name="Hamilton J.P."/>
            <person name="Kanamori H."/>
            <person name="McCombie W.R."/>
            <person name="Ouyang S."/>
            <person name="Schwartz D.C."/>
            <person name="Tanaka T."/>
            <person name="Wu J."/>
            <person name="Zhou S."/>
            <person name="Childs K.L."/>
            <person name="Davidson R.M."/>
            <person name="Lin H."/>
            <person name="Quesada-Ocampo L."/>
            <person name="Vaillancourt B."/>
            <person name="Sakai H."/>
            <person name="Lee S.S."/>
            <person name="Kim J."/>
            <person name="Numa H."/>
            <person name="Itoh T."/>
            <person name="Buell C.R."/>
            <person name="Matsumoto T."/>
        </authorList>
    </citation>
    <scope>GENOME REANNOTATION</scope>
    <source>
        <strain>cv. Nipponbare</strain>
    </source>
</reference>
<reference key="5">
    <citation type="journal article" date="2003" name="Science">
        <title>Collection, mapping, and annotation of over 28,000 cDNA clones from japonica rice.</title>
        <authorList>
            <consortium name="The rice full-length cDNA consortium"/>
        </authorList>
    </citation>
    <scope>NUCLEOTIDE SEQUENCE [LARGE SCALE MRNA]</scope>
    <source>
        <strain>cv. Nipponbare</strain>
    </source>
</reference>
<reference key="6">
    <citation type="journal article" date="2006" name="Funct. Integr. Genomics">
        <title>Structure and expression analysis of early auxin-responsive Aux/IAA gene family in rice (Oryza sativa).</title>
        <authorList>
            <person name="Jain M."/>
            <person name="Kaur N."/>
            <person name="Garg R."/>
            <person name="Thakur J.K."/>
            <person name="Tyagi A.K."/>
            <person name="Khurana J.P."/>
        </authorList>
    </citation>
    <scope>TISSUE SPECIFICITY</scope>
    <scope>INDUCTION</scope>
    <scope>NOMENCLATURE</scope>
</reference>
<protein>
    <recommendedName>
        <fullName>Auxin-responsive protein IAA3</fullName>
    </recommendedName>
    <alternativeName>
        <fullName>Indoleacetic acid-induced protein 3</fullName>
    </alternativeName>
</protein>